<evidence type="ECO:0000255" key="1">
    <source>
        <dbReference type="HAMAP-Rule" id="MF_01328"/>
    </source>
</evidence>
<evidence type="ECO:0000256" key="2">
    <source>
        <dbReference type="SAM" id="MobiDB-lite"/>
    </source>
</evidence>
<evidence type="ECO:0000305" key="3"/>
<keyword id="KW-1185">Reference proteome</keyword>
<keyword id="KW-0687">Ribonucleoprotein</keyword>
<keyword id="KW-0689">Ribosomal protein</keyword>
<keyword id="KW-0694">RNA-binding</keyword>
<keyword id="KW-0699">rRNA-binding</keyword>
<comment type="function">
    <text evidence="1">One of the primary rRNA binding proteins, this protein initially binds near the 5'-end of the 23S rRNA. It is important during the early stages of 50S assembly. It makes multiple contacts with different domains of the 23S rRNA in the assembled 50S subunit and ribosome.</text>
</comment>
<comment type="function">
    <text evidence="1">Forms part of the polypeptide exit tunnel.</text>
</comment>
<comment type="subunit">
    <text evidence="1">Part of the 50S ribosomal subunit.</text>
</comment>
<comment type="similarity">
    <text evidence="1">Belongs to the universal ribosomal protein uL4 family.</text>
</comment>
<name>RL4_PSYIN</name>
<gene>
    <name evidence="1" type="primary">rplD</name>
    <name type="ordered locus">Ping_3523</name>
</gene>
<proteinExistence type="inferred from homology"/>
<sequence length="201" mass="22174">MELVLKDAQSALEVSETTFGREFNEALVHQVVVAYAAGARQGTRAQKTRSDVSGGGKKPWRQKGTGRARSGTIRSPIWVGGGVTFAARPQDHSQKVNKKMYRGAVKSILSELVRQDRLIVVEKFSVEAPKTQELKAKLKELDLKDVLIITEELDENLFLAARNLYKVDVRDVQGIDPVSLIAFDKVLVTAAAVKKIEESLT</sequence>
<accession>A1T0E1</accession>
<reference key="1">
    <citation type="journal article" date="2008" name="BMC Genomics">
        <title>Genomics of an extreme psychrophile, Psychromonas ingrahamii.</title>
        <authorList>
            <person name="Riley M."/>
            <person name="Staley J.T."/>
            <person name="Danchin A."/>
            <person name="Wang T.Z."/>
            <person name="Brettin T.S."/>
            <person name="Hauser L.J."/>
            <person name="Land M.L."/>
            <person name="Thompson L.S."/>
        </authorList>
    </citation>
    <scope>NUCLEOTIDE SEQUENCE [LARGE SCALE GENOMIC DNA]</scope>
    <source>
        <strain>DSM 17664 / CCUG 51855 / 37</strain>
    </source>
</reference>
<dbReference type="EMBL" id="CP000510">
    <property type="protein sequence ID" value="ABM05206.1"/>
    <property type="molecule type" value="Genomic_DNA"/>
</dbReference>
<dbReference type="RefSeq" id="WP_011771754.1">
    <property type="nucleotide sequence ID" value="NC_008709.1"/>
</dbReference>
<dbReference type="SMR" id="A1T0E1"/>
<dbReference type="STRING" id="357804.Ping_3523"/>
<dbReference type="KEGG" id="pin:Ping_3523"/>
<dbReference type="eggNOG" id="COG0088">
    <property type="taxonomic scope" value="Bacteria"/>
</dbReference>
<dbReference type="HOGENOM" id="CLU_041575_5_2_6"/>
<dbReference type="OrthoDB" id="9803201at2"/>
<dbReference type="Proteomes" id="UP000000639">
    <property type="component" value="Chromosome"/>
</dbReference>
<dbReference type="GO" id="GO:1990904">
    <property type="term" value="C:ribonucleoprotein complex"/>
    <property type="evidence" value="ECO:0007669"/>
    <property type="project" value="UniProtKB-KW"/>
</dbReference>
<dbReference type="GO" id="GO:0005840">
    <property type="term" value="C:ribosome"/>
    <property type="evidence" value="ECO:0007669"/>
    <property type="project" value="UniProtKB-KW"/>
</dbReference>
<dbReference type="GO" id="GO:0019843">
    <property type="term" value="F:rRNA binding"/>
    <property type="evidence" value="ECO:0007669"/>
    <property type="project" value="UniProtKB-UniRule"/>
</dbReference>
<dbReference type="GO" id="GO:0003735">
    <property type="term" value="F:structural constituent of ribosome"/>
    <property type="evidence" value="ECO:0007669"/>
    <property type="project" value="InterPro"/>
</dbReference>
<dbReference type="GO" id="GO:0006412">
    <property type="term" value="P:translation"/>
    <property type="evidence" value="ECO:0007669"/>
    <property type="project" value="UniProtKB-UniRule"/>
</dbReference>
<dbReference type="FunFam" id="3.40.1370.10:FF:000001">
    <property type="entry name" value="50S ribosomal protein L4"/>
    <property type="match status" value="1"/>
</dbReference>
<dbReference type="Gene3D" id="3.40.1370.10">
    <property type="match status" value="1"/>
</dbReference>
<dbReference type="HAMAP" id="MF_01328_B">
    <property type="entry name" value="Ribosomal_uL4_B"/>
    <property type="match status" value="1"/>
</dbReference>
<dbReference type="InterPro" id="IPR002136">
    <property type="entry name" value="Ribosomal_uL4"/>
</dbReference>
<dbReference type="InterPro" id="IPR013005">
    <property type="entry name" value="Ribosomal_uL4-like"/>
</dbReference>
<dbReference type="InterPro" id="IPR023574">
    <property type="entry name" value="Ribosomal_uL4_dom_sf"/>
</dbReference>
<dbReference type="NCBIfam" id="TIGR03953">
    <property type="entry name" value="rplD_bact"/>
    <property type="match status" value="1"/>
</dbReference>
<dbReference type="PANTHER" id="PTHR10746">
    <property type="entry name" value="50S RIBOSOMAL PROTEIN L4"/>
    <property type="match status" value="1"/>
</dbReference>
<dbReference type="PANTHER" id="PTHR10746:SF6">
    <property type="entry name" value="LARGE RIBOSOMAL SUBUNIT PROTEIN UL4M"/>
    <property type="match status" value="1"/>
</dbReference>
<dbReference type="Pfam" id="PF00573">
    <property type="entry name" value="Ribosomal_L4"/>
    <property type="match status" value="1"/>
</dbReference>
<dbReference type="SUPFAM" id="SSF52166">
    <property type="entry name" value="Ribosomal protein L4"/>
    <property type="match status" value="1"/>
</dbReference>
<organism>
    <name type="scientific">Psychromonas ingrahamii (strain DSM 17664 / CCUG 51855 / 37)</name>
    <dbReference type="NCBI Taxonomy" id="357804"/>
    <lineage>
        <taxon>Bacteria</taxon>
        <taxon>Pseudomonadati</taxon>
        <taxon>Pseudomonadota</taxon>
        <taxon>Gammaproteobacteria</taxon>
        <taxon>Alteromonadales</taxon>
        <taxon>Psychromonadaceae</taxon>
        <taxon>Psychromonas</taxon>
    </lineage>
</organism>
<feature type="chain" id="PRO_1000052475" description="Large ribosomal subunit protein uL4">
    <location>
        <begin position="1"/>
        <end position="201"/>
    </location>
</feature>
<feature type="region of interest" description="Disordered" evidence="2">
    <location>
        <begin position="43"/>
        <end position="71"/>
    </location>
</feature>
<protein>
    <recommendedName>
        <fullName evidence="1">Large ribosomal subunit protein uL4</fullName>
    </recommendedName>
    <alternativeName>
        <fullName evidence="3">50S ribosomal protein L4</fullName>
    </alternativeName>
</protein>